<comment type="function">
    <text evidence="1">Bidirectionally degrades single-stranded DNA into large acid-insoluble oligonucleotides, which are then degraded further into small acid-soluble oligonucleotides.</text>
</comment>
<comment type="catalytic activity">
    <reaction evidence="1">
        <text>Exonucleolytic cleavage in either 5'- to 3'- or 3'- to 5'-direction to yield nucleoside 5'-phosphates.</text>
        <dbReference type="EC" id="3.1.11.6"/>
    </reaction>
</comment>
<comment type="subunit">
    <text evidence="1">Heterooligomer composed of large and small subunits.</text>
</comment>
<comment type="subcellular location">
    <subcellularLocation>
        <location evidence="1">Cytoplasm</location>
    </subcellularLocation>
</comment>
<comment type="similarity">
    <text evidence="1">Belongs to the XseA family.</text>
</comment>
<feature type="chain" id="PRO_1000122060" description="Exodeoxyribonuclease 7 large subunit">
    <location>
        <begin position="1"/>
        <end position="455"/>
    </location>
</feature>
<dbReference type="EC" id="3.1.11.6" evidence="1"/>
<dbReference type="EMBL" id="CP000970">
    <property type="protein sequence ID" value="ACB15749.1"/>
    <property type="molecule type" value="Genomic_DNA"/>
</dbReference>
<dbReference type="RefSeq" id="WP_000937902.1">
    <property type="nucleotide sequence ID" value="NC_010498.1"/>
</dbReference>
<dbReference type="SMR" id="B1LNG1"/>
<dbReference type="KEGG" id="ecm:EcSMS35_2658"/>
<dbReference type="HOGENOM" id="CLU_023625_3_1_6"/>
<dbReference type="Proteomes" id="UP000007011">
    <property type="component" value="Chromosome"/>
</dbReference>
<dbReference type="GO" id="GO:0005737">
    <property type="term" value="C:cytoplasm"/>
    <property type="evidence" value="ECO:0007669"/>
    <property type="project" value="UniProtKB-SubCell"/>
</dbReference>
<dbReference type="GO" id="GO:0009318">
    <property type="term" value="C:exodeoxyribonuclease VII complex"/>
    <property type="evidence" value="ECO:0007669"/>
    <property type="project" value="InterPro"/>
</dbReference>
<dbReference type="GO" id="GO:0008855">
    <property type="term" value="F:exodeoxyribonuclease VII activity"/>
    <property type="evidence" value="ECO:0007669"/>
    <property type="project" value="UniProtKB-UniRule"/>
</dbReference>
<dbReference type="GO" id="GO:0003676">
    <property type="term" value="F:nucleic acid binding"/>
    <property type="evidence" value="ECO:0007669"/>
    <property type="project" value="InterPro"/>
</dbReference>
<dbReference type="GO" id="GO:0006308">
    <property type="term" value="P:DNA catabolic process"/>
    <property type="evidence" value="ECO:0007669"/>
    <property type="project" value="UniProtKB-UniRule"/>
</dbReference>
<dbReference type="CDD" id="cd04489">
    <property type="entry name" value="ExoVII_LU_OBF"/>
    <property type="match status" value="1"/>
</dbReference>
<dbReference type="HAMAP" id="MF_00378">
    <property type="entry name" value="Exonuc_7_L"/>
    <property type="match status" value="1"/>
</dbReference>
<dbReference type="InterPro" id="IPR003753">
    <property type="entry name" value="Exonuc_VII_L"/>
</dbReference>
<dbReference type="InterPro" id="IPR020579">
    <property type="entry name" value="Exonuc_VII_lsu_C"/>
</dbReference>
<dbReference type="InterPro" id="IPR025824">
    <property type="entry name" value="OB-fold_nuc-bd_dom"/>
</dbReference>
<dbReference type="NCBIfam" id="TIGR00237">
    <property type="entry name" value="xseA"/>
    <property type="match status" value="1"/>
</dbReference>
<dbReference type="PANTHER" id="PTHR30008">
    <property type="entry name" value="EXODEOXYRIBONUCLEASE 7 LARGE SUBUNIT"/>
    <property type="match status" value="1"/>
</dbReference>
<dbReference type="PANTHER" id="PTHR30008:SF0">
    <property type="entry name" value="EXODEOXYRIBONUCLEASE 7 LARGE SUBUNIT"/>
    <property type="match status" value="1"/>
</dbReference>
<dbReference type="Pfam" id="PF02601">
    <property type="entry name" value="Exonuc_VII_L"/>
    <property type="match status" value="1"/>
</dbReference>
<dbReference type="Pfam" id="PF13742">
    <property type="entry name" value="tRNA_anti_2"/>
    <property type="match status" value="1"/>
</dbReference>
<gene>
    <name evidence="1" type="primary">xseA</name>
    <name type="ordered locus">EcSMS35_2658</name>
</gene>
<accession>B1LNG1</accession>
<name>EX7L_ECOSM</name>
<reference key="1">
    <citation type="journal article" date="2008" name="J. Bacteriol.">
        <title>Insights into the environmental resistance gene pool from the genome sequence of the multidrug-resistant environmental isolate Escherichia coli SMS-3-5.</title>
        <authorList>
            <person name="Fricke W.F."/>
            <person name="Wright M.S."/>
            <person name="Lindell A.H."/>
            <person name="Harkins D.M."/>
            <person name="Baker-Austin C."/>
            <person name="Ravel J."/>
            <person name="Stepanauskas R."/>
        </authorList>
    </citation>
    <scope>NUCLEOTIDE SEQUENCE [LARGE SCALE GENOMIC DNA]</scope>
    <source>
        <strain>SMS-3-5 / SECEC</strain>
    </source>
</reference>
<protein>
    <recommendedName>
        <fullName evidence="1">Exodeoxyribonuclease 7 large subunit</fullName>
        <ecNumber evidence="1">3.1.11.6</ecNumber>
    </recommendedName>
    <alternativeName>
        <fullName evidence="1">Exodeoxyribonuclease VII large subunit</fullName>
        <shortName evidence="1">Exonuclease VII large subunit</shortName>
    </alternativeName>
</protein>
<sequence length="455" mass="51231">MLPSQSPAIFTVSRLNQTVRLLLEHEMGQVWISGEISNFTQPASGHWYFTLKDDTAQVRCAMFRNSNRRVTFRPQHGQQVLVRANITLYEPRGDYQIIVESMQPAGEGLLQQKYEQLKAKLQAEGLFDLQYKNSLPSPAHCVGVITSKTGAALHDILHVLKRRDPSLPVIIYPTAVQGDDAPGQIVRAIELANQRNECDVLIVGRGGGSLEDLWSFNDERVARAIFASRIPVVSAVGHETDVTIADFVADLRAPTPSAAAEVVSRNQQELLRQVQSARQRLEMAMDYYLANRTRRFTQIHHRLQQQHPQLRLARQQTMLERLQKRMSFALENQLKRAGQHQQRLTQRLNQQNPQPKIHRAQTRIQQLEYRLAETLRAQLSATRERFGNAVTHLEAVSPLSTLARGYSVTSAADGAVLKQVKQVKVGETLTTRLGDGVVISEVSAVTKSRKPRKKA</sequence>
<keyword id="KW-0963">Cytoplasm</keyword>
<keyword id="KW-0269">Exonuclease</keyword>
<keyword id="KW-0378">Hydrolase</keyword>
<keyword id="KW-0540">Nuclease</keyword>
<evidence type="ECO:0000255" key="1">
    <source>
        <dbReference type="HAMAP-Rule" id="MF_00378"/>
    </source>
</evidence>
<proteinExistence type="inferred from homology"/>
<organism>
    <name type="scientific">Escherichia coli (strain SMS-3-5 / SECEC)</name>
    <dbReference type="NCBI Taxonomy" id="439855"/>
    <lineage>
        <taxon>Bacteria</taxon>
        <taxon>Pseudomonadati</taxon>
        <taxon>Pseudomonadota</taxon>
        <taxon>Gammaproteobacteria</taxon>
        <taxon>Enterobacterales</taxon>
        <taxon>Enterobacteriaceae</taxon>
        <taxon>Escherichia</taxon>
    </lineage>
</organism>